<accession>P75505</accession>
<comment type="subcellular location">
    <subcellularLocation>
        <location evidence="1">Cell membrane</location>
        <topology evidence="1">Lipid-anchor</topology>
    </subcellularLocation>
</comment>
<comment type="similarity">
    <text evidence="2">Belongs to the MG439/MG440 family.</text>
</comment>
<sequence>MRKKKFLSRFSFSSLFLLCGTLLSACTGIQADLRNLIKETTGKDIDLSKAIKTKEGKKNIIASLKKSYEVNPKDTTKLLLDAWKQSFEEGKLGIADFDFDHVAYPQTNDPFTMERKVDHFQMTYQSFKDLLVEARLSYTFNWFGDYSSGDFTAKRGDKHYFYLFLKIKSDPKKQFSAKKFLTEGEAFTDQEGKQTTRNLEWIEFSASISWWTKGKDDVSQKSLKKFLESFATNTGYSSDINLFSYLEYLIK</sequence>
<keyword id="KW-1003">Cell membrane</keyword>
<keyword id="KW-0449">Lipoprotein</keyword>
<keyword id="KW-0472">Membrane</keyword>
<keyword id="KW-0564">Palmitate</keyword>
<keyword id="KW-1185">Reference proteome</keyword>
<keyword id="KW-0732">Signal</keyword>
<proteinExistence type="inferred from homology"/>
<reference key="1">
    <citation type="journal article" date="1996" name="Nucleic Acids Res.">
        <title>Complete sequence analysis of the genome of the bacterium Mycoplasma pneumoniae.</title>
        <authorList>
            <person name="Himmelreich R."/>
            <person name="Hilbert H."/>
            <person name="Plagens H."/>
            <person name="Pirkl E."/>
            <person name="Li B.-C."/>
            <person name="Herrmann R."/>
        </authorList>
    </citation>
    <scope>NUCLEOTIDE SEQUENCE [LARGE SCALE GENOMIC DNA]</scope>
    <source>
        <strain>ATCC 29342 / M129 / Subtype 1</strain>
    </source>
</reference>
<name>Y271_MYCPN</name>
<feature type="signal peptide" evidence="1">
    <location>
        <begin position="1"/>
        <end position="25"/>
    </location>
</feature>
<feature type="chain" id="PRO_0000014056" description="Uncharacterized lipoprotein MPN_271">
    <location>
        <begin position="26"/>
        <end position="251"/>
    </location>
</feature>
<feature type="lipid moiety-binding region" description="N-palmitoyl cysteine" evidence="1">
    <location>
        <position position="26"/>
    </location>
</feature>
<feature type="lipid moiety-binding region" description="S-diacylglycerol cysteine" evidence="1">
    <location>
        <position position="26"/>
    </location>
</feature>
<protein>
    <recommendedName>
        <fullName>Uncharacterized lipoprotein MPN_271</fullName>
    </recommendedName>
</protein>
<gene>
    <name type="ordered locus">MPN_271</name>
    <name type="ORF">A65_orf251a</name>
    <name type="ORF">MP563</name>
</gene>
<dbReference type="EMBL" id="U00089">
    <property type="protein sequence ID" value="AAB96211.1"/>
    <property type="molecule type" value="Genomic_DNA"/>
</dbReference>
<dbReference type="PIR" id="S73889">
    <property type="entry name" value="S73889"/>
</dbReference>
<dbReference type="RefSeq" id="NP_109959.1">
    <property type="nucleotide sequence ID" value="NC_000912.1"/>
</dbReference>
<dbReference type="RefSeq" id="WP_010874628.1">
    <property type="nucleotide sequence ID" value="NC_000912.1"/>
</dbReference>
<dbReference type="STRING" id="272634.MPN_271"/>
<dbReference type="EnsemblBacteria" id="AAB96211">
    <property type="protein sequence ID" value="AAB96211"/>
    <property type="gene ID" value="MPN_271"/>
</dbReference>
<dbReference type="KEGG" id="mpn:MPN_271"/>
<dbReference type="PATRIC" id="fig|272634.6.peg.290"/>
<dbReference type="HOGENOM" id="CLU_1198717_0_0_14"/>
<dbReference type="BioCyc" id="MPNE272634:G1GJ3-424-MONOMER"/>
<dbReference type="Proteomes" id="UP000000808">
    <property type="component" value="Chromosome"/>
</dbReference>
<dbReference type="GO" id="GO:0005886">
    <property type="term" value="C:plasma membrane"/>
    <property type="evidence" value="ECO:0007669"/>
    <property type="project" value="UniProtKB-SubCell"/>
</dbReference>
<dbReference type="InterPro" id="IPR001595">
    <property type="entry name" value="Lipoprotein_3"/>
</dbReference>
<dbReference type="Pfam" id="PF00938">
    <property type="entry name" value="Lipoprotein_3"/>
    <property type="match status" value="1"/>
</dbReference>
<dbReference type="PROSITE" id="PS51257">
    <property type="entry name" value="PROKAR_LIPOPROTEIN"/>
    <property type="match status" value="1"/>
</dbReference>
<organism>
    <name type="scientific">Mycoplasma pneumoniae (strain ATCC 29342 / M129 / Subtype 1)</name>
    <name type="common">Mycoplasmoides pneumoniae</name>
    <dbReference type="NCBI Taxonomy" id="272634"/>
    <lineage>
        <taxon>Bacteria</taxon>
        <taxon>Bacillati</taxon>
        <taxon>Mycoplasmatota</taxon>
        <taxon>Mycoplasmoidales</taxon>
        <taxon>Mycoplasmoidaceae</taxon>
        <taxon>Mycoplasmoides</taxon>
    </lineage>
</organism>
<evidence type="ECO:0000255" key="1">
    <source>
        <dbReference type="PROSITE-ProRule" id="PRU00303"/>
    </source>
</evidence>
<evidence type="ECO:0000305" key="2"/>